<proteinExistence type="inferred from homology"/>
<keyword id="KW-0687">Ribonucleoprotein</keyword>
<keyword id="KW-0689">Ribosomal protein</keyword>
<keyword id="KW-0694">RNA-binding</keyword>
<keyword id="KW-0699">rRNA-binding</keyword>
<name>RL10_METVO</name>
<reference key="1">
    <citation type="submission" date="1999-03" db="EMBL/GenBank/DDBJ databases">
        <authorList>
            <person name="Piendl W."/>
            <person name="Tribus M."/>
        </authorList>
    </citation>
    <scope>NUCLEOTIDE SEQUENCE [GENOMIC DNA]</scope>
</reference>
<dbReference type="EMBL" id="AF139164">
    <property type="protein sequence ID" value="AAD32665.1"/>
    <property type="molecule type" value="Genomic_DNA"/>
</dbReference>
<dbReference type="SMR" id="Q9Y8J3"/>
<dbReference type="GO" id="GO:0022625">
    <property type="term" value="C:cytosolic large ribosomal subunit"/>
    <property type="evidence" value="ECO:0007669"/>
    <property type="project" value="TreeGrafter"/>
</dbReference>
<dbReference type="GO" id="GO:0070180">
    <property type="term" value="F:large ribosomal subunit rRNA binding"/>
    <property type="evidence" value="ECO:0007669"/>
    <property type="project" value="TreeGrafter"/>
</dbReference>
<dbReference type="GO" id="GO:0003735">
    <property type="term" value="F:structural constituent of ribosome"/>
    <property type="evidence" value="ECO:0007669"/>
    <property type="project" value="TreeGrafter"/>
</dbReference>
<dbReference type="GO" id="GO:0002181">
    <property type="term" value="P:cytoplasmic translation"/>
    <property type="evidence" value="ECO:0007669"/>
    <property type="project" value="TreeGrafter"/>
</dbReference>
<dbReference type="GO" id="GO:0000027">
    <property type="term" value="P:ribosomal large subunit assembly"/>
    <property type="evidence" value="ECO:0007669"/>
    <property type="project" value="TreeGrafter"/>
</dbReference>
<dbReference type="CDD" id="cd05795">
    <property type="entry name" value="Ribosomal_P0_L10e"/>
    <property type="match status" value="1"/>
</dbReference>
<dbReference type="FunFam" id="3.90.105.20:FF:000001">
    <property type="entry name" value="60S acidic ribosomal protein P0"/>
    <property type="match status" value="1"/>
</dbReference>
<dbReference type="Gene3D" id="3.30.70.1730">
    <property type="match status" value="1"/>
</dbReference>
<dbReference type="Gene3D" id="3.90.105.20">
    <property type="match status" value="1"/>
</dbReference>
<dbReference type="Gene3D" id="6.10.140.760">
    <property type="match status" value="1"/>
</dbReference>
<dbReference type="HAMAP" id="MF_00280">
    <property type="entry name" value="Ribosomal_uL10_arch"/>
    <property type="match status" value="1"/>
</dbReference>
<dbReference type="InterPro" id="IPR050323">
    <property type="entry name" value="Ribosomal_protein_uL10"/>
</dbReference>
<dbReference type="InterPro" id="IPR001790">
    <property type="entry name" value="Ribosomal_uL10"/>
</dbReference>
<dbReference type="InterPro" id="IPR040637">
    <property type="entry name" value="Ribosomal_uL10-like_insert"/>
</dbReference>
<dbReference type="InterPro" id="IPR043164">
    <property type="entry name" value="Ribosomal_uL10-like_insert_sf"/>
</dbReference>
<dbReference type="InterPro" id="IPR043141">
    <property type="entry name" value="Ribosomal_uL10-like_sf"/>
</dbReference>
<dbReference type="InterPro" id="IPR022909">
    <property type="entry name" value="Ribosomal_uL10_arc"/>
</dbReference>
<dbReference type="NCBIfam" id="NF003096">
    <property type="entry name" value="PRK04019.1-2"/>
    <property type="match status" value="1"/>
</dbReference>
<dbReference type="NCBIfam" id="NF003098">
    <property type="entry name" value="PRK04019.1-5"/>
    <property type="match status" value="1"/>
</dbReference>
<dbReference type="PANTHER" id="PTHR45699">
    <property type="entry name" value="60S ACIDIC RIBOSOMAL PROTEIN P0"/>
    <property type="match status" value="1"/>
</dbReference>
<dbReference type="PANTHER" id="PTHR45699:SF3">
    <property type="entry name" value="LARGE RIBOSOMAL SUBUNIT PROTEIN UL10"/>
    <property type="match status" value="1"/>
</dbReference>
<dbReference type="Pfam" id="PF00466">
    <property type="entry name" value="Ribosomal_L10"/>
    <property type="match status" value="1"/>
</dbReference>
<dbReference type="Pfam" id="PF17777">
    <property type="entry name" value="RL10P_insert"/>
    <property type="match status" value="1"/>
</dbReference>
<dbReference type="SUPFAM" id="SSF160369">
    <property type="entry name" value="Ribosomal protein L10-like"/>
    <property type="match status" value="1"/>
</dbReference>
<accession>Q9Y8J3</accession>
<evidence type="ECO:0000255" key="1">
    <source>
        <dbReference type="HAMAP-Rule" id="MF_00280"/>
    </source>
</evidence>
<evidence type="ECO:0000305" key="2"/>
<sequence length="297" mass="31820">MSEVKFEHKIASWKVDEVNSLKELLKSGNVIALIDMMEVPSVQLQEIRDTIRDSMTLKMSRNTLMKRAIEEVAEETGNPSFTKLIDCMEKGAALIATEMNPFKLYKTLNESKSPAPIKAGATAPCDIEIKAGSTGMPPGPFLSELKAVGLPAAIEKGKIGIKEDTIVAKEGDVVSAKLAVVLSKLDIKPMEVGLNVLGVYEDGIVYDPEILKIDEDEFLAKLQSAYTGAFNLSVNAVIPTSATIETIVQKAFSNAKAVSIEGAFLTSETSDAILGKATAQMLAVAKLAGEDALDDEL</sequence>
<protein>
    <recommendedName>
        <fullName evidence="1">Large ribosomal subunit protein uL10</fullName>
    </recommendedName>
    <alternativeName>
        <fullName evidence="2">50S ribosomal protein L10</fullName>
    </alternativeName>
    <alternativeName>
        <fullName evidence="1">Acidic ribosomal protein P0 homolog</fullName>
    </alternativeName>
</protein>
<comment type="function">
    <text evidence="1">Forms part of the ribosomal stalk, playing a central role in the interaction of the ribosome with GTP-bound translation factors.</text>
</comment>
<comment type="subunit">
    <text evidence="1">Part of the 50S ribosomal subunit. Forms part of the ribosomal stalk which helps the ribosome interact with GTP-bound translation factors. Forms a heptameric L10(L12)2(L12)2(L12)2 complex, where L10 forms an elongated spine to which the L12 dimers bind in a sequential fashion.</text>
</comment>
<comment type="similarity">
    <text evidence="1">Belongs to the universal ribosomal protein uL10 family.</text>
</comment>
<gene>
    <name evidence="1" type="primary">rpl10</name>
    <name evidence="1" type="synonym">rplP0</name>
</gene>
<organism>
    <name type="scientific">Methanococcus voltae</name>
    <dbReference type="NCBI Taxonomy" id="2188"/>
    <lineage>
        <taxon>Archaea</taxon>
        <taxon>Methanobacteriati</taxon>
        <taxon>Methanobacteriota</taxon>
        <taxon>Methanomada group</taxon>
        <taxon>Methanococci</taxon>
        <taxon>Methanococcales</taxon>
        <taxon>Methanococcaceae</taxon>
        <taxon>Methanococcus</taxon>
    </lineage>
</organism>
<feature type="chain" id="PRO_0000154799" description="Large ribosomal subunit protein uL10">
    <location>
        <begin position="1"/>
        <end position="297" status="greater than"/>
    </location>
</feature>
<feature type="non-terminal residue">
    <location>
        <position position="297"/>
    </location>
</feature>